<dbReference type="EC" id="3.4.21.92" evidence="1"/>
<dbReference type="EMBL" id="CP000133">
    <property type="protein sequence ID" value="ABC91836.1"/>
    <property type="molecule type" value="Genomic_DNA"/>
</dbReference>
<dbReference type="RefSeq" id="WP_011426306.1">
    <property type="nucleotide sequence ID" value="NC_007761.1"/>
</dbReference>
<dbReference type="SMR" id="Q2K5Q0"/>
<dbReference type="KEGG" id="ret:RHE_CH03069"/>
<dbReference type="eggNOG" id="COG0740">
    <property type="taxonomic scope" value="Bacteria"/>
</dbReference>
<dbReference type="HOGENOM" id="CLU_058707_4_0_5"/>
<dbReference type="OrthoDB" id="9802800at2"/>
<dbReference type="Proteomes" id="UP000001936">
    <property type="component" value="Chromosome"/>
</dbReference>
<dbReference type="GO" id="GO:0005737">
    <property type="term" value="C:cytoplasm"/>
    <property type="evidence" value="ECO:0007669"/>
    <property type="project" value="UniProtKB-SubCell"/>
</dbReference>
<dbReference type="GO" id="GO:0009368">
    <property type="term" value="C:endopeptidase Clp complex"/>
    <property type="evidence" value="ECO:0007669"/>
    <property type="project" value="TreeGrafter"/>
</dbReference>
<dbReference type="GO" id="GO:0004176">
    <property type="term" value="F:ATP-dependent peptidase activity"/>
    <property type="evidence" value="ECO:0007669"/>
    <property type="project" value="InterPro"/>
</dbReference>
<dbReference type="GO" id="GO:0051117">
    <property type="term" value="F:ATPase binding"/>
    <property type="evidence" value="ECO:0007669"/>
    <property type="project" value="TreeGrafter"/>
</dbReference>
<dbReference type="GO" id="GO:0004252">
    <property type="term" value="F:serine-type endopeptidase activity"/>
    <property type="evidence" value="ECO:0007669"/>
    <property type="project" value="UniProtKB-UniRule"/>
</dbReference>
<dbReference type="GO" id="GO:0006515">
    <property type="term" value="P:protein quality control for misfolded or incompletely synthesized proteins"/>
    <property type="evidence" value="ECO:0007669"/>
    <property type="project" value="TreeGrafter"/>
</dbReference>
<dbReference type="CDD" id="cd07017">
    <property type="entry name" value="S14_ClpP_2"/>
    <property type="match status" value="1"/>
</dbReference>
<dbReference type="Gene3D" id="3.90.226.10">
    <property type="entry name" value="2-enoyl-CoA Hydratase, Chain A, domain 1"/>
    <property type="match status" value="1"/>
</dbReference>
<dbReference type="HAMAP" id="MF_00444">
    <property type="entry name" value="ClpP"/>
    <property type="match status" value="1"/>
</dbReference>
<dbReference type="InterPro" id="IPR001907">
    <property type="entry name" value="ClpP"/>
</dbReference>
<dbReference type="InterPro" id="IPR029045">
    <property type="entry name" value="ClpP/crotonase-like_dom_sf"/>
</dbReference>
<dbReference type="InterPro" id="IPR023562">
    <property type="entry name" value="ClpP/TepA"/>
</dbReference>
<dbReference type="InterPro" id="IPR033135">
    <property type="entry name" value="ClpP_His_AS"/>
</dbReference>
<dbReference type="NCBIfam" id="NF009205">
    <property type="entry name" value="PRK12553.1"/>
    <property type="match status" value="1"/>
</dbReference>
<dbReference type="PANTHER" id="PTHR10381">
    <property type="entry name" value="ATP-DEPENDENT CLP PROTEASE PROTEOLYTIC SUBUNIT"/>
    <property type="match status" value="1"/>
</dbReference>
<dbReference type="PANTHER" id="PTHR10381:SF70">
    <property type="entry name" value="ATP-DEPENDENT CLP PROTEASE PROTEOLYTIC SUBUNIT"/>
    <property type="match status" value="1"/>
</dbReference>
<dbReference type="Pfam" id="PF00574">
    <property type="entry name" value="CLP_protease"/>
    <property type="match status" value="1"/>
</dbReference>
<dbReference type="PRINTS" id="PR00127">
    <property type="entry name" value="CLPPROTEASEP"/>
</dbReference>
<dbReference type="SUPFAM" id="SSF52096">
    <property type="entry name" value="ClpP/crotonase"/>
    <property type="match status" value="1"/>
</dbReference>
<dbReference type="PROSITE" id="PS00382">
    <property type="entry name" value="CLP_PROTEASE_HIS"/>
    <property type="match status" value="1"/>
</dbReference>
<comment type="function">
    <text evidence="1">Cleaves peptides in various proteins in a process that requires ATP hydrolysis. Has a chymotrypsin-like activity. Plays a major role in the degradation of misfolded proteins.</text>
</comment>
<comment type="catalytic activity">
    <reaction evidence="1">
        <text>Hydrolysis of proteins to small peptides in the presence of ATP and magnesium. alpha-casein is the usual test substrate. In the absence of ATP, only oligopeptides shorter than five residues are hydrolyzed (such as succinyl-Leu-Tyr-|-NHMec, and Leu-Tyr-Leu-|-Tyr-Trp, in which cleavage of the -Tyr-|-Leu- and -Tyr-|-Trp bonds also occurs).</text>
        <dbReference type="EC" id="3.4.21.92"/>
    </reaction>
</comment>
<comment type="subunit">
    <text evidence="1">Fourteen ClpP subunits assemble into 2 heptameric rings which stack back to back to give a disk-like structure with a central cavity, resembling the structure of eukaryotic proteasomes.</text>
</comment>
<comment type="subcellular location">
    <subcellularLocation>
        <location evidence="1">Cytoplasm</location>
    </subcellularLocation>
</comment>
<comment type="similarity">
    <text evidence="1">Belongs to the peptidase S14 family.</text>
</comment>
<protein>
    <recommendedName>
        <fullName evidence="1">ATP-dependent Clp protease proteolytic subunit 3</fullName>
        <ecNumber evidence="1">3.4.21.92</ecNumber>
    </recommendedName>
    <alternativeName>
        <fullName evidence="1">Endopeptidase Clp 3</fullName>
    </alternativeName>
</protein>
<feature type="chain" id="PRO_0000252834" description="ATP-dependent Clp protease proteolytic subunit 3">
    <location>
        <begin position="1"/>
        <end position="194"/>
    </location>
</feature>
<feature type="active site" description="Nucleophile" evidence="1">
    <location>
        <position position="96"/>
    </location>
</feature>
<feature type="active site" evidence="1">
    <location>
        <position position="121"/>
    </location>
</feature>
<reference key="1">
    <citation type="journal article" date="2006" name="Proc. Natl. Acad. Sci. U.S.A.">
        <title>The partitioned Rhizobium etli genome: genetic and metabolic redundancy in seven interacting replicons.</title>
        <authorList>
            <person name="Gonzalez V."/>
            <person name="Santamaria R.I."/>
            <person name="Bustos P."/>
            <person name="Hernandez-Gonzalez I."/>
            <person name="Medrano-Soto A."/>
            <person name="Moreno-Hagelsieb G."/>
            <person name="Janga S.C."/>
            <person name="Ramirez M.A."/>
            <person name="Jimenez-Jacinto V."/>
            <person name="Collado-Vides J."/>
            <person name="Davila G."/>
        </authorList>
    </citation>
    <scope>NUCLEOTIDE SEQUENCE [LARGE SCALE GENOMIC DNA]</scope>
    <source>
        <strain>ATCC 51251 / DSM 11541 / JCM 21823 / NBRC 15573 / CFN 42</strain>
    </source>
</reference>
<gene>
    <name evidence="1" type="primary">clpP3</name>
    <name type="ordered locus">RHE_CH03069</name>
</gene>
<organism>
    <name type="scientific">Rhizobium etli (strain ATCC 51251 / DSM 11541 / JCM 21823 / NBRC 15573 / CFN 42)</name>
    <dbReference type="NCBI Taxonomy" id="347834"/>
    <lineage>
        <taxon>Bacteria</taxon>
        <taxon>Pseudomonadati</taxon>
        <taxon>Pseudomonadota</taxon>
        <taxon>Alphaproteobacteria</taxon>
        <taxon>Hyphomicrobiales</taxon>
        <taxon>Rhizobiaceae</taxon>
        <taxon>Rhizobium/Agrobacterium group</taxon>
        <taxon>Rhizobium</taxon>
    </lineage>
</organism>
<name>CLPP3_RHIEC</name>
<keyword id="KW-0963">Cytoplasm</keyword>
<keyword id="KW-0378">Hydrolase</keyword>
<keyword id="KW-0645">Protease</keyword>
<keyword id="KW-1185">Reference proteome</keyword>
<keyword id="KW-0720">Serine protease</keyword>
<accession>Q2K5Q0</accession>
<sequence length="194" mass="21579">MNDEEQDDKTKELPLGKETEANLFKSRSIFIYGPINQELAQKVCSQLVALAAASDEDIRIYVNSPGGHVESGDSIHDMVKFIKPKVWMIGTGWVASAGALIYVAAPRERRLCLPNTRFLLHQPSGGTRGMASDIEIQAREIIKMNERLNKIMAEATGQPLEKIAKDTDRDYWLSAEEAKDYGLVSRIVTSQADI</sequence>
<evidence type="ECO:0000255" key="1">
    <source>
        <dbReference type="HAMAP-Rule" id="MF_00444"/>
    </source>
</evidence>
<proteinExistence type="inferred from homology"/>